<feature type="chain" id="PRO_0000064379" description="45 kDa antigen">
    <location>
        <begin position="1" status="less than"/>
        <end position="240"/>
    </location>
</feature>
<feature type="domain" description="Fibronectin type-III 1">
    <location>
        <begin position="1" status="less than"/>
        <end position="109"/>
    </location>
</feature>
<feature type="domain" description="Fibronectin type-III 2">
    <location>
        <begin position="110"/>
        <end position="210"/>
    </location>
</feature>
<feature type="non-terminal residue">
    <location>
        <position position="1"/>
    </location>
</feature>
<organism>
    <name type="scientific">Taenia ovis</name>
    <name type="common">Sheep tapeworm</name>
    <name type="synonym">Cysticercus ovis</name>
    <dbReference type="NCBI Taxonomy" id="6203"/>
    <lineage>
        <taxon>Eukaryota</taxon>
        <taxon>Metazoa</taxon>
        <taxon>Spiralia</taxon>
        <taxon>Lophotrochozoa</taxon>
        <taxon>Platyhelminthes</taxon>
        <taxon>Cestoda</taxon>
        <taxon>Eucestoda</taxon>
        <taxon>Cyclophyllidea</taxon>
        <taxon>Taeniidae</taxon>
        <taxon>Taenia</taxon>
    </lineage>
</organism>
<name>45KD_TAEOV</name>
<reference key="1">
    <citation type="journal article" date="1989" name="Nature">
        <title>Vaccination against ovine cysticercosis using a defined recombinant antigen.</title>
        <authorList>
            <person name="Johnson K.S."/>
            <person name="Harrison G.B.L."/>
            <person name="Lightowlers M.W."/>
            <person name="O'Hoy K.L."/>
            <person name="Cougle W.G."/>
            <person name="Dempster R.P."/>
            <person name="Lawrence S.B."/>
            <person name="Vinton J.G."/>
            <person name="Heath D.D."/>
            <person name="Rickard M.D."/>
        </authorList>
    </citation>
    <scope>NUCLEOTIDE SEQUENCE [MRNA]</scope>
</reference>
<sequence length="240" mass="26127">EFPDYEQPIERTVVEYPSLRDIFAWEPPTSNSIGLTWQRHAFPGVEREVLTLKAVPTSEPNNTKTAYAKLGSGKVTLDGLKPNATYLVTATANISGDTILVLSNTFHTLANGTNIINNIFHWGPVTNQSIQVRWDQIKPEETSALIVTLTAEMASDPGVERSESALFGKGKVTVDGLESDTLYIATVMVFRNGRQYFNSTRDIRTLKSGHKEVTVVTTSGSGIASTILGLLLTCVALVLA</sequence>
<protein>
    <recommendedName>
        <fullName>45 kDa antigen</fullName>
    </recommendedName>
    <alternativeName>
        <fullName>45W antigen</fullName>
    </alternativeName>
</protein>
<proteinExistence type="evidence at transcript level"/>
<dbReference type="EMBL" id="X15228">
    <property type="protein sequence ID" value="CAA33300.1"/>
    <property type="molecule type" value="mRNA"/>
</dbReference>
<dbReference type="SMR" id="P19617"/>
<dbReference type="InterPro" id="IPR003961">
    <property type="entry name" value="FN3_dom"/>
</dbReference>
<dbReference type="InterPro" id="IPR036116">
    <property type="entry name" value="FN3_sf"/>
</dbReference>
<dbReference type="SMART" id="SM00060">
    <property type="entry name" value="FN3"/>
    <property type="match status" value="2"/>
</dbReference>
<dbReference type="SUPFAM" id="SSF49265">
    <property type="entry name" value="Fibronectin type III"/>
    <property type="match status" value="1"/>
</dbReference>
<accession>P19617</accession>
<keyword id="KW-0677">Repeat</keyword>